<evidence type="ECO:0000250" key="1">
    <source>
        <dbReference type="UniProtKB" id="A6QIR4"/>
    </source>
</evidence>
<evidence type="ECO:0000305" key="2"/>
<comment type="function">
    <text evidence="1">Toxic component of a type II toxin-antitoxin (TA) system. Ribosome-independent, sequence-specific endoribonuclease that cleaves mRNA, thus inhibiting protein synthesis and inducing bacterial stasis. It cuts between the first and nucleotides of 5'-UACAU-3' in single-stranded RNA. Neutralized by coexpression with cognate antitoxin MazE.</text>
</comment>
<comment type="subunit">
    <text evidence="1">Forms a complex with MazE which is no longer active as an endoribonuclease.</text>
</comment>
<comment type="similarity">
    <text evidence="2">Belongs to the PemK/MazF family.</text>
</comment>
<proteinExistence type="inferred from homology"/>
<name>MAZF_STAEQ</name>
<sequence>MIRRGDVYLADLSPVQGSEQGGVRPVVIIQNDTGNKYSPTVIVAAITGRINKAKIPTHVEIEKKKYKLDKDSVILLEQIRTLDKKRLKEKLTFLSESKMIEVDNALDISLGLNNFDHHKS</sequence>
<accession>Q5HME7</accession>
<reference key="1">
    <citation type="journal article" date="2005" name="J. Bacteriol.">
        <title>Insights on evolution of virulence and resistance from the complete genome analysis of an early methicillin-resistant Staphylococcus aureus strain and a biofilm-producing methicillin-resistant Staphylococcus epidermidis strain.</title>
        <authorList>
            <person name="Gill S.R."/>
            <person name="Fouts D.E."/>
            <person name="Archer G.L."/>
            <person name="Mongodin E.F."/>
            <person name="DeBoy R.T."/>
            <person name="Ravel J."/>
            <person name="Paulsen I.T."/>
            <person name="Kolonay J.F."/>
            <person name="Brinkac L.M."/>
            <person name="Beanan M.J."/>
            <person name="Dodson R.J."/>
            <person name="Daugherty S.C."/>
            <person name="Madupu R."/>
            <person name="Angiuoli S.V."/>
            <person name="Durkin A.S."/>
            <person name="Haft D.H."/>
            <person name="Vamathevan J.J."/>
            <person name="Khouri H."/>
            <person name="Utterback T.R."/>
            <person name="Lee C."/>
            <person name="Dimitrov G."/>
            <person name="Jiang L."/>
            <person name="Qin H."/>
            <person name="Weidman J."/>
            <person name="Tran K."/>
            <person name="Kang K.H."/>
            <person name="Hance I.R."/>
            <person name="Nelson K.E."/>
            <person name="Fraser C.M."/>
        </authorList>
    </citation>
    <scope>NUCLEOTIDE SEQUENCE [LARGE SCALE GENOMIC DNA]</scope>
    <source>
        <strain>ATCC 35984 / DSM 28319 / BCRC 17069 / CCUG 31568 / BM 3577 / RP62A</strain>
    </source>
</reference>
<organism>
    <name type="scientific">Staphylococcus epidermidis (strain ATCC 35984 / DSM 28319 / BCRC 17069 / CCUG 31568 / BM 3577 / RP62A)</name>
    <dbReference type="NCBI Taxonomy" id="176279"/>
    <lineage>
        <taxon>Bacteria</taxon>
        <taxon>Bacillati</taxon>
        <taxon>Bacillota</taxon>
        <taxon>Bacilli</taxon>
        <taxon>Bacillales</taxon>
        <taxon>Staphylococcaceae</taxon>
        <taxon>Staphylococcus</taxon>
    </lineage>
</organism>
<dbReference type="EC" id="3.1.-.-"/>
<dbReference type="EMBL" id="CP000029">
    <property type="protein sequence ID" value="AAW55037.1"/>
    <property type="molecule type" value="Genomic_DNA"/>
</dbReference>
<dbReference type="RefSeq" id="WP_001829891.1">
    <property type="nucleotide sequence ID" value="NC_002976.3"/>
</dbReference>
<dbReference type="SMR" id="Q5HME7"/>
<dbReference type="STRING" id="176279.SERP1681"/>
<dbReference type="KEGG" id="ser:SERP1681"/>
<dbReference type="eggNOG" id="COG2337">
    <property type="taxonomic scope" value="Bacteria"/>
</dbReference>
<dbReference type="HOGENOM" id="CLU_121823_1_0_9"/>
<dbReference type="Proteomes" id="UP000000531">
    <property type="component" value="Chromosome"/>
</dbReference>
<dbReference type="GO" id="GO:0003677">
    <property type="term" value="F:DNA binding"/>
    <property type="evidence" value="ECO:0007669"/>
    <property type="project" value="InterPro"/>
</dbReference>
<dbReference type="GO" id="GO:0003723">
    <property type="term" value="F:RNA binding"/>
    <property type="evidence" value="ECO:0007669"/>
    <property type="project" value="UniProtKB-KW"/>
</dbReference>
<dbReference type="GO" id="GO:0004521">
    <property type="term" value="F:RNA endonuclease activity"/>
    <property type="evidence" value="ECO:0007669"/>
    <property type="project" value="TreeGrafter"/>
</dbReference>
<dbReference type="GO" id="GO:0006402">
    <property type="term" value="P:mRNA catabolic process"/>
    <property type="evidence" value="ECO:0007669"/>
    <property type="project" value="TreeGrafter"/>
</dbReference>
<dbReference type="GO" id="GO:0016075">
    <property type="term" value="P:rRNA catabolic process"/>
    <property type="evidence" value="ECO:0007669"/>
    <property type="project" value="TreeGrafter"/>
</dbReference>
<dbReference type="Gene3D" id="2.30.30.110">
    <property type="match status" value="1"/>
</dbReference>
<dbReference type="InterPro" id="IPR003477">
    <property type="entry name" value="PemK-like"/>
</dbReference>
<dbReference type="InterPro" id="IPR011067">
    <property type="entry name" value="Plasmid_toxin/cell-grow_inhib"/>
</dbReference>
<dbReference type="PANTHER" id="PTHR33988:SF2">
    <property type="entry name" value="ENDORIBONUCLEASE MAZF"/>
    <property type="match status" value="1"/>
</dbReference>
<dbReference type="PANTHER" id="PTHR33988">
    <property type="entry name" value="ENDORIBONUCLEASE MAZF-RELATED"/>
    <property type="match status" value="1"/>
</dbReference>
<dbReference type="Pfam" id="PF02452">
    <property type="entry name" value="PemK_toxin"/>
    <property type="match status" value="1"/>
</dbReference>
<dbReference type="PIRSF" id="PIRSF033490">
    <property type="entry name" value="MazF"/>
    <property type="match status" value="1"/>
</dbReference>
<dbReference type="SUPFAM" id="SSF50118">
    <property type="entry name" value="Cell growth inhibitor/plasmid maintenance toxic component"/>
    <property type="match status" value="1"/>
</dbReference>
<keyword id="KW-0255">Endonuclease</keyword>
<keyword id="KW-0378">Hydrolase</keyword>
<keyword id="KW-0540">Nuclease</keyword>
<keyword id="KW-1185">Reference proteome</keyword>
<keyword id="KW-0694">RNA-binding</keyword>
<keyword id="KW-1277">Toxin-antitoxin system</keyword>
<protein>
    <recommendedName>
        <fullName>Endoribonuclease MazF</fullName>
        <ecNumber>3.1.-.-</ecNumber>
    </recommendedName>
    <alternativeName>
        <fullName>Toxin MazF</fullName>
    </alternativeName>
    <alternativeName>
        <fullName>mRNA interferase MazF</fullName>
    </alternativeName>
</protein>
<gene>
    <name type="primary">mazF</name>
    <name type="ordered locus">SERP1681</name>
</gene>
<feature type="chain" id="PRO_0000330707" description="Endoribonuclease MazF">
    <location>
        <begin position="1"/>
        <end position="120"/>
    </location>
</feature>